<comment type="function">
    <text>The light-harvesting complex (LHC) functions as a light receptor, it captures and delivers excitation energy to photosystems with which it is closely associated.</text>
</comment>
<comment type="cofactor">
    <text evidence="1">Binds at least 14 chlorophylls (8 Chl-a and 6 Chl-b) and carotenoids such as lutein and neoxanthin.</text>
</comment>
<comment type="subunit">
    <text>The LHC complex consists of chlorophyll a-b binding proteins.</text>
</comment>
<comment type="subcellular location">
    <subcellularLocation>
        <location>Plastid</location>
        <location>Chloroplast thylakoid membrane</location>
        <topology>Multi-pass membrane protein</topology>
    </subcellularLocation>
</comment>
<comment type="domain">
    <text>The N-terminus of the protein extends into the stroma where it is involved with adhesion of granal membranes and post-translational modifications; both are believed to mediate the distribution of excitation energy between photosystems I and II.</text>
</comment>
<comment type="PTM">
    <text evidence="1">Photoregulated by reversible phosphorylation of its threonine residues.</text>
</comment>
<comment type="similarity">
    <text evidence="5">Belongs to the light-harvesting chlorophyll a/b-binding (LHC) protein family.</text>
</comment>
<proteinExistence type="evidence at transcript level"/>
<dbReference type="EMBL" id="M16057">
    <property type="protein sequence ID" value="AAA33124.1"/>
    <property type="molecule type" value="mRNA"/>
</dbReference>
<dbReference type="PIR" id="S07942">
    <property type="entry name" value="CDKV"/>
</dbReference>
<dbReference type="SMR" id="P08221"/>
<dbReference type="eggNOG" id="ENOG502QPU1">
    <property type="taxonomic scope" value="Eukaryota"/>
</dbReference>
<dbReference type="GO" id="GO:0009535">
    <property type="term" value="C:chloroplast thylakoid membrane"/>
    <property type="evidence" value="ECO:0007669"/>
    <property type="project" value="UniProtKB-SubCell"/>
</dbReference>
<dbReference type="GO" id="GO:0009522">
    <property type="term" value="C:photosystem I"/>
    <property type="evidence" value="ECO:0007669"/>
    <property type="project" value="UniProtKB-KW"/>
</dbReference>
<dbReference type="GO" id="GO:0009523">
    <property type="term" value="C:photosystem II"/>
    <property type="evidence" value="ECO:0007669"/>
    <property type="project" value="UniProtKB-KW"/>
</dbReference>
<dbReference type="GO" id="GO:0016168">
    <property type="term" value="F:chlorophyll binding"/>
    <property type="evidence" value="ECO:0007669"/>
    <property type="project" value="UniProtKB-KW"/>
</dbReference>
<dbReference type="GO" id="GO:0046872">
    <property type="term" value="F:metal ion binding"/>
    <property type="evidence" value="ECO:0007669"/>
    <property type="project" value="UniProtKB-KW"/>
</dbReference>
<dbReference type="GO" id="GO:0009765">
    <property type="term" value="P:photosynthesis, light harvesting"/>
    <property type="evidence" value="ECO:0007669"/>
    <property type="project" value="InterPro"/>
</dbReference>
<dbReference type="FunFam" id="1.10.3460.10:FF:000001">
    <property type="entry name" value="Chlorophyll a-b binding protein, chloroplastic"/>
    <property type="match status" value="1"/>
</dbReference>
<dbReference type="Gene3D" id="1.10.3460.10">
    <property type="entry name" value="Chlorophyll a/b binding protein domain"/>
    <property type="match status" value="1"/>
</dbReference>
<dbReference type="InterPro" id="IPR001344">
    <property type="entry name" value="Chloro_AB-bd_pln"/>
</dbReference>
<dbReference type="InterPro" id="IPR022796">
    <property type="entry name" value="Chloroa_b-bind"/>
</dbReference>
<dbReference type="PANTHER" id="PTHR21649">
    <property type="entry name" value="CHLOROPHYLL A/B BINDING PROTEIN"/>
    <property type="match status" value="1"/>
</dbReference>
<dbReference type="Pfam" id="PF00504">
    <property type="entry name" value="Chloroa_b-bind"/>
    <property type="match status" value="1"/>
</dbReference>
<dbReference type="SUPFAM" id="SSF103511">
    <property type="entry name" value="Chlorophyll a-b binding protein"/>
    <property type="match status" value="1"/>
</dbReference>
<sequence>PTLAGQAVKLSPNAPEIQGNAKFTMRKTASKSVSSGSPWYGPDRVKYLGPFSGEPPSYLTGEFPGDYGWDTAGLSADPETFAKNRELEVIHSRWAMLGALGCVFPELLSRNGVKFGEAVWFKAGSQIFSEGGLDYLGNPSLVHAQSILAIWACQVVLMGAVEGYRIAGGPLGEVTDPIYPGGSFDPLGLADDPEAFAELKVKELKNGRLAMFSMFGFFVQAIVTGKGPLENLADHLADPVNNNAWAYATNFVPGK</sequence>
<name>CB21_CUCSA</name>
<keyword id="KW-0007">Acetylation</keyword>
<keyword id="KW-0148">Chlorophyll</keyword>
<keyword id="KW-0150">Chloroplast</keyword>
<keyword id="KW-0157">Chromophore</keyword>
<keyword id="KW-0460">Magnesium</keyword>
<keyword id="KW-0472">Membrane</keyword>
<keyword id="KW-0479">Metal-binding</keyword>
<keyword id="KW-0597">Phosphoprotein</keyword>
<keyword id="KW-0602">Photosynthesis</keyword>
<keyword id="KW-0603">Photosystem I</keyword>
<keyword id="KW-0604">Photosystem II</keyword>
<keyword id="KW-0934">Plastid</keyword>
<keyword id="KW-0793">Thylakoid</keyword>
<keyword id="KW-0809">Transit peptide</keyword>
<keyword id="KW-0812">Transmembrane</keyword>
<keyword id="KW-1133">Transmembrane helix</keyword>
<evidence type="ECO:0000250" key="1"/>
<evidence type="ECO:0000250" key="2">
    <source>
        <dbReference type="UniProtKB" id="P07371"/>
    </source>
</evidence>
<evidence type="ECO:0000250" key="3">
    <source>
        <dbReference type="UniProtKB" id="P12333"/>
    </source>
</evidence>
<evidence type="ECO:0000255" key="4"/>
<evidence type="ECO:0000305" key="5"/>
<accession>P08221</accession>
<protein>
    <recommendedName>
        <fullName>Chlorophyll a-b binding protein of LHCII type I, chloroplastic</fullName>
        <shortName>CAB</shortName>
        <shortName>LHCP</shortName>
    </recommendedName>
</protein>
<reference key="1">
    <citation type="journal article" date="1987" name="Planta">
        <title>Expression of two nuclear genes encoding chloroplast proteins during early development of cucumber seedlings.</title>
        <authorList>
            <person name="Greenland A.J."/>
            <person name="Thomas M.V."/>
            <person name="Walden R.M."/>
        </authorList>
    </citation>
    <scope>NUCLEOTIDE SEQUENCE [MRNA]</scope>
</reference>
<feature type="transit peptide" description="Chloroplast" evidence="5">
    <location>
        <begin position="1" status="less than"/>
        <end position="25"/>
    </location>
</feature>
<feature type="chain" id="PRO_0000003656" description="Chlorophyll a-b binding protein of LHCII type I, chloroplastic">
    <location>
        <begin position="26"/>
        <end position="255"/>
    </location>
</feature>
<feature type="transmembrane region" description="Helical" evidence="4">
    <location>
        <begin position="89"/>
        <end position="109"/>
    </location>
</feature>
<feature type="transmembrane region" description="Helical" evidence="4">
    <location>
        <begin position="141"/>
        <end position="161"/>
    </location>
</feature>
<feature type="transmembrane region" description="Helical" evidence="4">
    <location>
        <begin position="209"/>
        <end position="229"/>
    </location>
</feature>
<feature type="binding site" description="axial binding residue" evidence="3">
    <location>
        <position position="47"/>
    </location>
    <ligand>
        <name>chlorophyll b</name>
        <dbReference type="ChEBI" id="CHEBI:61721"/>
        <label>1</label>
    </ligand>
    <ligandPart>
        <name>Mg</name>
        <dbReference type="ChEBI" id="CHEBI:25107"/>
    </ligandPart>
</feature>
<feature type="binding site" evidence="1">
    <location>
        <position position="69"/>
    </location>
    <ligand>
        <name>chlorophyll a</name>
        <dbReference type="ChEBI" id="CHEBI:58416"/>
        <label>1</label>
    </ligand>
</feature>
<feature type="binding site" evidence="1">
    <location>
        <position position="75"/>
    </location>
    <ligand>
        <name>chlorophyll a</name>
        <dbReference type="ChEBI" id="CHEBI:58416"/>
        <label>1</label>
    </ligand>
</feature>
<feature type="binding site" description="axial binding residue" evidence="3">
    <location>
        <position position="88"/>
    </location>
    <ligand>
        <name>chlorophyll a</name>
        <dbReference type="ChEBI" id="CHEBI:58416"/>
        <label>1</label>
    </ligand>
    <ligandPart>
        <name>Mg</name>
        <dbReference type="ChEBI" id="CHEBI:25107"/>
    </ligandPart>
</feature>
<feature type="binding site" description="axial binding residue" evidence="3">
    <location>
        <position position="91"/>
    </location>
    <ligand>
        <name>chlorophyll a</name>
        <dbReference type="ChEBI" id="CHEBI:58416"/>
        <label>2</label>
    </ligand>
    <ligandPart>
        <name>Mg</name>
        <dbReference type="ChEBI" id="CHEBI:25107"/>
    </ligandPart>
</feature>
<feature type="binding site" evidence="1">
    <location>
        <position position="93"/>
    </location>
    <ligand>
        <name>chlorophyll b</name>
        <dbReference type="ChEBI" id="CHEBI:61721"/>
        <label>2</label>
    </ligand>
</feature>
<feature type="binding site" evidence="1">
    <location>
        <position position="126"/>
    </location>
    <ligand>
        <name>chlorophyll a</name>
        <dbReference type="ChEBI" id="CHEBI:58416"/>
        <label>3</label>
    </ligand>
</feature>
<feature type="binding site" evidence="1">
    <location>
        <position position="136"/>
    </location>
    <ligand>
        <name>chlorophyll a</name>
        <dbReference type="ChEBI" id="CHEBI:58416"/>
        <label>3</label>
    </ligand>
</feature>
<feature type="binding site" description="axial binding residue" evidence="3">
    <location>
        <position position="142"/>
    </location>
    <ligand>
        <name>chlorophyll b</name>
        <dbReference type="ChEBI" id="CHEBI:61721"/>
        <label>2</label>
    </ligand>
    <ligandPart>
        <name>Mg</name>
        <dbReference type="ChEBI" id="CHEBI:25107"/>
    </ligandPart>
</feature>
<feature type="binding site" evidence="1">
    <location>
        <position position="146"/>
    </location>
    <ligand>
        <name>chlorophyll b</name>
        <dbReference type="ChEBI" id="CHEBI:61721"/>
        <label>3</label>
    </ligand>
</feature>
<feature type="binding site" evidence="1">
    <location>
        <position position="154"/>
    </location>
    <ligand>
        <name>chlorophyll b</name>
        <dbReference type="ChEBI" id="CHEBI:61721"/>
        <label>4</label>
    </ligand>
</feature>
<feature type="binding site" evidence="2">
    <location>
        <position position="154"/>
    </location>
    <ligand>
        <name>chlorophyll b</name>
        <dbReference type="ChEBI" id="CHEBI:61721"/>
        <label>5</label>
    </ligand>
</feature>
<feature type="binding site" description="axial binding residue" evidence="3">
    <location>
        <position position="162"/>
    </location>
    <ligand>
        <name>chlorophyll b</name>
        <dbReference type="ChEBI" id="CHEBI:61721"/>
        <label>3</label>
    </ligand>
    <ligandPart>
        <name>Mg</name>
        <dbReference type="ChEBI" id="CHEBI:25107"/>
    </ligandPart>
</feature>
<feature type="binding site" evidence="1">
    <location>
        <position position="165"/>
    </location>
    <ligand>
        <name>chlorophyll b</name>
        <dbReference type="ChEBI" id="CHEBI:61721"/>
        <label>4</label>
    </ligand>
</feature>
<feature type="binding site" evidence="1">
    <location>
        <position position="171"/>
    </location>
    <ligand>
        <name>chlorophyll b</name>
        <dbReference type="ChEBI" id="CHEBI:61721"/>
        <label>2</label>
    </ligand>
</feature>
<feature type="binding site" evidence="1">
    <location>
        <position position="202"/>
    </location>
    <ligand>
        <name>chlorophyll a</name>
        <dbReference type="ChEBI" id="CHEBI:58416"/>
        <label>5</label>
    </ligand>
</feature>
<feature type="binding site" description="axial binding residue" evidence="3">
    <location>
        <position position="203"/>
    </location>
    <ligand>
        <name>chlorophyll a</name>
        <dbReference type="ChEBI" id="CHEBI:58416"/>
        <label>3</label>
    </ligand>
    <ligandPart>
        <name>Mg</name>
        <dbReference type="ChEBI" id="CHEBI:25107"/>
    </ligandPart>
</feature>
<feature type="binding site" description="axial binding residue" evidence="3">
    <location>
        <position position="206"/>
    </location>
    <ligand>
        <name>chlorophyll a</name>
        <dbReference type="ChEBI" id="CHEBI:58416"/>
        <label>4</label>
    </ligand>
    <ligandPart>
        <name>Mg</name>
        <dbReference type="ChEBI" id="CHEBI:25107"/>
    </ligandPart>
</feature>
<feature type="binding site" evidence="1">
    <location>
        <position position="208"/>
    </location>
    <ligand>
        <name>chlorophyll a</name>
        <dbReference type="ChEBI" id="CHEBI:58416"/>
        <label>1</label>
    </ligand>
</feature>
<feature type="binding site" description="axial binding residue" evidence="3">
    <location>
        <position position="220"/>
    </location>
    <ligand>
        <name>chlorophyll a</name>
        <dbReference type="ChEBI" id="CHEBI:58416"/>
        <label>5</label>
    </ligand>
    <ligandPart>
        <name>Mg</name>
        <dbReference type="ChEBI" id="CHEBI:25107"/>
    </ligandPart>
</feature>
<feature type="binding site" description="axial binding residue" evidence="3">
    <location>
        <position position="235"/>
    </location>
    <ligand>
        <name>chlorophyll a</name>
        <dbReference type="ChEBI" id="CHEBI:58416"/>
        <label>6</label>
    </ligand>
    <ligandPart>
        <name>Mg</name>
        <dbReference type="ChEBI" id="CHEBI:25107"/>
    </ligandPart>
</feature>
<feature type="binding site" evidence="1">
    <location>
        <position position="244"/>
    </location>
    <ligand>
        <name>chlorophyll a</name>
        <dbReference type="ChEBI" id="CHEBI:58416"/>
        <label>6</label>
    </ligand>
</feature>
<feature type="binding site" evidence="1">
    <location>
        <position position="251"/>
    </location>
    <ligand>
        <name>chlorophyll b</name>
        <dbReference type="ChEBI" id="CHEBI:61721"/>
        <label>5</label>
    </ligand>
</feature>
<feature type="modified residue" description="N2-acetylarginine" evidence="1">
    <location>
        <position position="26"/>
    </location>
</feature>
<feature type="modified residue" description="Phosphothreonine" evidence="1">
    <location>
        <position position="28"/>
    </location>
</feature>
<feature type="non-terminal residue">
    <location>
        <position position="1"/>
    </location>
</feature>
<organism>
    <name type="scientific">Cucumis sativus</name>
    <name type="common">Cucumber</name>
    <dbReference type="NCBI Taxonomy" id="3659"/>
    <lineage>
        <taxon>Eukaryota</taxon>
        <taxon>Viridiplantae</taxon>
        <taxon>Streptophyta</taxon>
        <taxon>Embryophyta</taxon>
        <taxon>Tracheophyta</taxon>
        <taxon>Spermatophyta</taxon>
        <taxon>Magnoliopsida</taxon>
        <taxon>eudicotyledons</taxon>
        <taxon>Gunneridae</taxon>
        <taxon>Pentapetalae</taxon>
        <taxon>rosids</taxon>
        <taxon>fabids</taxon>
        <taxon>Cucurbitales</taxon>
        <taxon>Cucurbitaceae</taxon>
        <taxon>Benincaseae</taxon>
        <taxon>Cucumis</taxon>
    </lineage>
</organism>